<name>KAT1_MOUSE</name>
<proteinExistence type="evidence at protein level"/>
<gene>
    <name type="primary">Kyat1</name>
    <name type="synonym">Ccbl1</name>
    <name type="synonym">Kat</name>
</gene>
<keyword id="KW-0032">Aminotransferase</keyword>
<keyword id="KW-0963">Cytoplasm</keyword>
<keyword id="KW-0456">Lyase</keyword>
<keyword id="KW-0663">Pyridoxal phosphate</keyword>
<keyword id="KW-1185">Reference proteome</keyword>
<keyword id="KW-0808">Transferase</keyword>
<organism>
    <name type="scientific">Mus musculus</name>
    <name type="common">Mouse</name>
    <dbReference type="NCBI Taxonomy" id="10090"/>
    <lineage>
        <taxon>Eukaryota</taxon>
        <taxon>Metazoa</taxon>
        <taxon>Chordata</taxon>
        <taxon>Craniata</taxon>
        <taxon>Vertebrata</taxon>
        <taxon>Euteleostomi</taxon>
        <taxon>Mammalia</taxon>
        <taxon>Eutheria</taxon>
        <taxon>Euarchontoglires</taxon>
        <taxon>Glires</taxon>
        <taxon>Rodentia</taxon>
        <taxon>Myomorpha</taxon>
        <taxon>Muroidea</taxon>
        <taxon>Muridae</taxon>
        <taxon>Murinae</taxon>
        <taxon>Mus</taxon>
        <taxon>Mus</taxon>
    </lineage>
</organism>
<accession>Q8BTY1</accession>
<accession>Q8BY27</accession>
<evidence type="ECO:0000250" key="1">
    <source>
        <dbReference type="UniProtKB" id="Q16773"/>
    </source>
</evidence>
<evidence type="ECO:0000305" key="2"/>
<evidence type="ECO:0007744" key="3">
    <source>
    </source>
</evidence>
<reference key="1">
    <citation type="journal article" date="2005" name="Science">
        <title>The transcriptional landscape of the mammalian genome.</title>
        <authorList>
            <person name="Carninci P."/>
            <person name="Kasukawa T."/>
            <person name="Katayama S."/>
            <person name="Gough J."/>
            <person name="Frith M.C."/>
            <person name="Maeda N."/>
            <person name="Oyama R."/>
            <person name="Ravasi T."/>
            <person name="Lenhard B."/>
            <person name="Wells C."/>
            <person name="Kodzius R."/>
            <person name="Shimokawa K."/>
            <person name="Bajic V.B."/>
            <person name="Brenner S.E."/>
            <person name="Batalov S."/>
            <person name="Forrest A.R."/>
            <person name="Zavolan M."/>
            <person name="Davis M.J."/>
            <person name="Wilming L.G."/>
            <person name="Aidinis V."/>
            <person name="Allen J.E."/>
            <person name="Ambesi-Impiombato A."/>
            <person name="Apweiler R."/>
            <person name="Aturaliya R.N."/>
            <person name="Bailey T.L."/>
            <person name="Bansal M."/>
            <person name="Baxter L."/>
            <person name="Beisel K.W."/>
            <person name="Bersano T."/>
            <person name="Bono H."/>
            <person name="Chalk A.M."/>
            <person name="Chiu K.P."/>
            <person name="Choudhary V."/>
            <person name="Christoffels A."/>
            <person name="Clutterbuck D.R."/>
            <person name="Crowe M.L."/>
            <person name="Dalla E."/>
            <person name="Dalrymple B.P."/>
            <person name="de Bono B."/>
            <person name="Della Gatta G."/>
            <person name="di Bernardo D."/>
            <person name="Down T."/>
            <person name="Engstrom P."/>
            <person name="Fagiolini M."/>
            <person name="Faulkner G."/>
            <person name="Fletcher C.F."/>
            <person name="Fukushima T."/>
            <person name="Furuno M."/>
            <person name="Futaki S."/>
            <person name="Gariboldi M."/>
            <person name="Georgii-Hemming P."/>
            <person name="Gingeras T.R."/>
            <person name="Gojobori T."/>
            <person name="Green R.E."/>
            <person name="Gustincich S."/>
            <person name="Harbers M."/>
            <person name="Hayashi Y."/>
            <person name="Hensch T.K."/>
            <person name="Hirokawa N."/>
            <person name="Hill D."/>
            <person name="Huminiecki L."/>
            <person name="Iacono M."/>
            <person name="Ikeo K."/>
            <person name="Iwama A."/>
            <person name="Ishikawa T."/>
            <person name="Jakt M."/>
            <person name="Kanapin A."/>
            <person name="Katoh M."/>
            <person name="Kawasawa Y."/>
            <person name="Kelso J."/>
            <person name="Kitamura H."/>
            <person name="Kitano H."/>
            <person name="Kollias G."/>
            <person name="Krishnan S.P."/>
            <person name="Kruger A."/>
            <person name="Kummerfeld S.K."/>
            <person name="Kurochkin I.V."/>
            <person name="Lareau L.F."/>
            <person name="Lazarevic D."/>
            <person name="Lipovich L."/>
            <person name="Liu J."/>
            <person name="Liuni S."/>
            <person name="McWilliam S."/>
            <person name="Madan Babu M."/>
            <person name="Madera M."/>
            <person name="Marchionni L."/>
            <person name="Matsuda H."/>
            <person name="Matsuzawa S."/>
            <person name="Miki H."/>
            <person name="Mignone F."/>
            <person name="Miyake S."/>
            <person name="Morris K."/>
            <person name="Mottagui-Tabar S."/>
            <person name="Mulder N."/>
            <person name="Nakano N."/>
            <person name="Nakauchi H."/>
            <person name="Ng P."/>
            <person name="Nilsson R."/>
            <person name="Nishiguchi S."/>
            <person name="Nishikawa S."/>
            <person name="Nori F."/>
            <person name="Ohara O."/>
            <person name="Okazaki Y."/>
            <person name="Orlando V."/>
            <person name="Pang K.C."/>
            <person name="Pavan W.J."/>
            <person name="Pavesi G."/>
            <person name="Pesole G."/>
            <person name="Petrovsky N."/>
            <person name="Piazza S."/>
            <person name="Reed J."/>
            <person name="Reid J.F."/>
            <person name="Ring B.Z."/>
            <person name="Ringwald M."/>
            <person name="Rost B."/>
            <person name="Ruan Y."/>
            <person name="Salzberg S.L."/>
            <person name="Sandelin A."/>
            <person name="Schneider C."/>
            <person name="Schoenbach C."/>
            <person name="Sekiguchi K."/>
            <person name="Semple C.A."/>
            <person name="Seno S."/>
            <person name="Sessa L."/>
            <person name="Sheng Y."/>
            <person name="Shibata Y."/>
            <person name="Shimada H."/>
            <person name="Shimada K."/>
            <person name="Silva D."/>
            <person name="Sinclair B."/>
            <person name="Sperling S."/>
            <person name="Stupka E."/>
            <person name="Sugiura K."/>
            <person name="Sultana R."/>
            <person name="Takenaka Y."/>
            <person name="Taki K."/>
            <person name="Tammoja K."/>
            <person name="Tan S.L."/>
            <person name="Tang S."/>
            <person name="Taylor M.S."/>
            <person name="Tegner J."/>
            <person name="Teichmann S.A."/>
            <person name="Ueda H.R."/>
            <person name="van Nimwegen E."/>
            <person name="Verardo R."/>
            <person name="Wei C.L."/>
            <person name="Yagi K."/>
            <person name="Yamanishi H."/>
            <person name="Zabarovsky E."/>
            <person name="Zhu S."/>
            <person name="Zimmer A."/>
            <person name="Hide W."/>
            <person name="Bult C."/>
            <person name="Grimmond S.M."/>
            <person name="Teasdale R.D."/>
            <person name="Liu E.T."/>
            <person name="Brusic V."/>
            <person name="Quackenbush J."/>
            <person name="Wahlestedt C."/>
            <person name="Mattick J.S."/>
            <person name="Hume D.A."/>
            <person name="Kai C."/>
            <person name="Sasaki D."/>
            <person name="Tomaru Y."/>
            <person name="Fukuda S."/>
            <person name="Kanamori-Katayama M."/>
            <person name="Suzuki M."/>
            <person name="Aoki J."/>
            <person name="Arakawa T."/>
            <person name="Iida J."/>
            <person name="Imamura K."/>
            <person name="Itoh M."/>
            <person name="Kato T."/>
            <person name="Kawaji H."/>
            <person name="Kawagashira N."/>
            <person name="Kawashima T."/>
            <person name="Kojima M."/>
            <person name="Kondo S."/>
            <person name="Konno H."/>
            <person name="Nakano K."/>
            <person name="Ninomiya N."/>
            <person name="Nishio T."/>
            <person name="Okada M."/>
            <person name="Plessy C."/>
            <person name="Shibata K."/>
            <person name="Shiraki T."/>
            <person name="Suzuki S."/>
            <person name="Tagami M."/>
            <person name="Waki K."/>
            <person name="Watahiki A."/>
            <person name="Okamura-Oho Y."/>
            <person name="Suzuki H."/>
            <person name="Kawai J."/>
            <person name="Hayashizaki Y."/>
        </authorList>
    </citation>
    <scope>NUCLEOTIDE SEQUENCE [LARGE SCALE MRNA]</scope>
    <source>
        <strain>C57BL/6J</strain>
        <strain>NOD</strain>
        <tissue>Thymus</tissue>
    </source>
</reference>
<reference key="2">
    <citation type="journal article" date="2004" name="Genome Res.">
        <title>The status, quality, and expansion of the NIH full-length cDNA project: the Mammalian Gene Collection (MGC).</title>
        <authorList>
            <consortium name="The MGC Project Team"/>
        </authorList>
    </citation>
    <scope>NUCLEOTIDE SEQUENCE [LARGE SCALE MRNA]</scope>
    <source>
        <strain>C57BL/6J</strain>
        <strain>FVB/N</strain>
        <tissue>Brain</tissue>
        <tissue>Salivary gland</tissue>
    </source>
</reference>
<reference key="3">
    <citation type="journal article" date="2010" name="Cell">
        <title>A tissue-specific atlas of mouse protein phosphorylation and expression.</title>
        <authorList>
            <person name="Huttlin E.L."/>
            <person name="Jedrychowski M.P."/>
            <person name="Elias J.E."/>
            <person name="Goswami T."/>
            <person name="Rad R."/>
            <person name="Beausoleil S.A."/>
            <person name="Villen J."/>
            <person name="Haas W."/>
            <person name="Sowa M.E."/>
            <person name="Gygi S.P."/>
        </authorList>
    </citation>
    <scope>IDENTIFICATION BY MASS SPECTROMETRY [LARGE SCALE ANALYSIS]</scope>
    <source>
        <tissue>Brain</tissue>
        <tissue>Brown adipose tissue</tissue>
        <tissue>Heart</tissue>
        <tissue>Kidney</tissue>
        <tissue>Liver</tissue>
        <tissue>Lung</tissue>
        <tissue>Pancreas</tissue>
        <tissue>Testis</tissue>
    </source>
</reference>
<reference key="4">
    <citation type="journal article" date="2013" name="Mol. Cell">
        <title>SIRT5-mediated lysine desuccinylation impacts diverse metabolic pathways.</title>
        <authorList>
            <person name="Park J."/>
            <person name="Chen Y."/>
            <person name="Tishkoff D.X."/>
            <person name="Peng C."/>
            <person name="Tan M."/>
            <person name="Dai L."/>
            <person name="Xie Z."/>
            <person name="Zhang Y."/>
            <person name="Zwaans B.M."/>
            <person name="Skinner M.E."/>
            <person name="Lombard D.B."/>
            <person name="Zhao Y."/>
        </authorList>
    </citation>
    <scope>SUCCINYLATION [LARGE SCALE ANALYSIS] AT LYS-82 AND LYS-413</scope>
    <scope>IDENTIFICATION BY MASS SPECTROMETRY [LARGE SCALE ANALYSIS]</scope>
    <source>
        <tissue>Liver</tissue>
    </source>
</reference>
<protein>
    <recommendedName>
        <fullName evidence="1">Kynurenine--oxoglutarate transaminase 1</fullName>
        <ecNumber evidence="1">2.6.1.7</ecNumber>
    </recommendedName>
    <alternativeName>
        <fullName evidence="1">Cysteine-S-conjugate beta-lyase</fullName>
        <ecNumber evidence="1">4.4.1.13</ecNumber>
    </alternativeName>
    <alternativeName>
        <fullName>Glutamine transaminase K</fullName>
        <shortName>GTK</shortName>
    </alternativeName>
    <alternativeName>
        <fullName evidence="1">Glutamine--phenylpyruvate transaminase</fullName>
        <ecNumber evidence="1">2.6.1.64</ecNumber>
    </alternativeName>
    <alternativeName>
        <fullName>Kynurenine aminotransferase 1</fullName>
    </alternativeName>
    <alternativeName>
        <fullName>Kynurenine aminotransferase I</fullName>
        <shortName>KATI</shortName>
    </alternativeName>
    <alternativeName>
        <fullName>Kynurenine--oxoglutarate transaminase I</fullName>
    </alternativeName>
</protein>
<comment type="function">
    <text evidence="1">Catalyzes the irreversible transamination of the L-tryptophan metabolite L-kynurenine to form kynurenic acid (KA), an intermediate in the tryptophan catabolic pathway which is also a broad spectrum antagonist of the three ionotropic excitatory amino acid receptors among others. Metabolizes the cysteine conjugates of certain halogenated alkenes and alkanes to form reactive metabolites. Catalyzes the beta-elimination of S-conjugates and Se-conjugates of L-(seleno)cysteine, resulting in the cleavage of the C-S or C-Se bond.</text>
</comment>
<comment type="catalytic activity">
    <reaction evidence="1">
        <text>L-kynurenine + 2-oxoglutarate = kynurenate + L-glutamate + H2O</text>
        <dbReference type="Rhea" id="RHEA:65560"/>
        <dbReference type="ChEBI" id="CHEBI:15377"/>
        <dbReference type="ChEBI" id="CHEBI:16810"/>
        <dbReference type="ChEBI" id="CHEBI:29985"/>
        <dbReference type="ChEBI" id="CHEBI:57959"/>
        <dbReference type="ChEBI" id="CHEBI:58454"/>
        <dbReference type="EC" id="2.6.1.7"/>
    </reaction>
    <physiologicalReaction direction="left-to-right" evidence="1">
        <dbReference type="Rhea" id="RHEA:65561"/>
    </physiologicalReaction>
</comment>
<comment type="catalytic activity">
    <reaction evidence="1">
        <text>3-phenylpyruvate + L-glutamine = 2-oxoglutaramate + L-phenylalanine</text>
        <dbReference type="Rhea" id="RHEA:17593"/>
        <dbReference type="ChEBI" id="CHEBI:16769"/>
        <dbReference type="ChEBI" id="CHEBI:18005"/>
        <dbReference type="ChEBI" id="CHEBI:58095"/>
        <dbReference type="ChEBI" id="CHEBI:58359"/>
        <dbReference type="EC" id="2.6.1.64"/>
    </reaction>
</comment>
<comment type="catalytic activity">
    <reaction evidence="1">
        <text>an S-substituted L-cysteine + H2O = a thiol + pyruvate + NH4(+)</text>
        <dbReference type="Rhea" id="RHEA:18121"/>
        <dbReference type="ChEBI" id="CHEBI:15361"/>
        <dbReference type="ChEBI" id="CHEBI:15377"/>
        <dbReference type="ChEBI" id="CHEBI:28938"/>
        <dbReference type="ChEBI" id="CHEBI:29256"/>
        <dbReference type="ChEBI" id="CHEBI:58717"/>
        <dbReference type="EC" id="4.4.1.13"/>
    </reaction>
    <physiologicalReaction direction="left-to-right" evidence="1">
        <dbReference type="Rhea" id="RHEA:18122"/>
    </physiologicalReaction>
</comment>
<comment type="cofactor">
    <cofactor evidence="1">
        <name>pyridoxal 5'-phosphate</name>
        <dbReference type="ChEBI" id="CHEBI:597326"/>
    </cofactor>
</comment>
<comment type="pathway">
    <text>Amino-acid degradation; L-kynurenine degradation; kynurenate from L-kynurenine: step 1/2.</text>
</comment>
<comment type="subunit">
    <text evidence="1">Homodimer.</text>
</comment>
<comment type="subcellular location">
    <subcellularLocation>
        <location evidence="1">Cytoplasm</location>
        <location evidence="1">Cytosol</location>
    </subcellularLocation>
</comment>
<comment type="similarity">
    <text evidence="2">Belongs to the class-I pyridoxal-phosphate-dependent aminotransferase family.</text>
</comment>
<feature type="chain" id="PRO_0000123943" description="Kynurenine--oxoglutarate transaminase 1">
    <location>
        <begin position="1"/>
        <end position="424"/>
    </location>
</feature>
<feature type="binding site" evidence="1">
    <location>
        <position position="36"/>
    </location>
    <ligand>
        <name>substrate</name>
    </ligand>
</feature>
<feature type="binding site" evidence="1">
    <location>
        <position position="185"/>
    </location>
    <ligand>
        <name>substrate</name>
    </ligand>
</feature>
<feature type="binding site" evidence="1">
    <location>
        <position position="398"/>
    </location>
    <ligand>
        <name>substrate</name>
    </ligand>
</feature>
<feature type="modified residue" description="N6-succinyllysine" evidence="3">
    <location>
        <position position="82"/>
    </location>
</feature>
<feature type="modified residue" description="N6-(pyridoxal phosphate)lysine" evidence="1">
    <location>
        <position position="247"/>
    </location>
</feature>
<feature type="modified residue" description="N6-succinyllysine" evidence="3">
    <location>
        <position position="413"/>
    </location>
</feature>
<feature type="sequence conflict" description="In Ref. 1; BAC31248." evidence="2" ref="1">
    <original>H</original>
    <variation>R</variation>
    <location>
        <position position="390"/>
    </location>
</feature>
<sequence length="424" mass="47564">MSKQLQARRLEGIDHNPWVEFTRLSKEYDVVNLGQGFPDFSPPDFAVQAFQQATTGNFMLNQYTSAFGYPPLTKILASFFGKLLGQEMDPLKNVLVTVGAYGALFTAFQALVDEGDEVIIIEPAFNCYEPMTMMAGGRPVFVSLRLSPAPKGQLGSSNDWQLDPTELASKFTPRTKILVLNTPNNPLGKVFSKKELELVAALCQQHDVLCFSDEVYQWLVYDGHQHISIASLPGMWERTLTIGSAGKSFSATGWKVGWVMGPDNIMKHLRTVHQNSIFHCPTQAQAAVAQCFEREQQHFGQPSSYFLQLPQAMGLNRDHMIQSLQSVGLKPLIPQGSYFLIADISDFKSSMPDLPGAMDEPYDTRFAKWMIKNKGLSAIPVSTFYSQPHHKDFDHYIRFCFVKDKATLQAMDKRLCSWKGEPQA</sequence>
<dbReference type="EC" id="2.6.1.7" evidence="1"/>
<dbReference type="EC" id="4.4.1.13" evidence="1"/>
<dbReference type="EC" id="2.6.1.64" evidence="1"/>
<dbReference type="EMBL" id="AK042391">
    <property type="protein sequence ID" value="BAC31248.1"/>
    <property type="molecule type" value="mRNA"/>
</dbReference>
<dbReference type="EMBL" id="AK088404">
    <property type="protein sequence ID" value="BAC40333.1"/>
    <property type="molecule type" value="mRNA"/>
</dbReference>
<dbReference type="EMBL" id="BC016206">
    <property type="protein sequence ID" value="AAH16206.1"/>
    <property type="molecule type" value="mRNA"/>
</dbReference>
<dbReference type="EMBL" id="BC052047">
    <property type="protein sequence ID" value="AAH52047.1"/>
    <property type="molecule type" value="mRNA"/>
</dbReference>
<dbReference type="CCDS" id="CCDS15874.1"/>
<dbReference type="RefSeq" id="NP_001343403.1">
    <property type="nucleotide sequence ID" value="NM_001356474.2"/>
</dbReference>
<dbReference type="RefSeq" id="NP_765992.2">
    <property type="nucleotide sequence ID" value="NM_172404.2"/>
</dbReference>
<dbReference type="RefSeq" id="XP_006498377.2">
    <property type="nucleotide sequence ID" value="XM_006498314.2"/>
</dbReference>
<dbReference type="SMR" id="Q8BTY1"/>
<dbReference type="BioGRID" id="213950">
    <property type="interactions" value="1"/>
</dbReference>
<dbReference type="FunCoup" id="Q8BTY1">
    <property type="interactions" value="1199"/>
</dbReference>
<dbReference type="STRING" id="10090.ENSMUSP00000109291"/>
<dbReference type="GlyGen" id="Q8BTY1">
    <property type="glycosylation" value="1 site, 1 O-linked glycan (1 site)"/>
</dbReference>
<dbReference type="iPTMnet" id="Q8BTY1"/>
<dbReference type="PhosphoSitePlus" id="Q8BTY1"/>
<dbReference type="SwissPalm" id="Q8BTY1"/>
<dbReference type="jPOST" id="Q8BTY1"/>
<dbReference type="PaxDb" id="10090-ENSMUSP00000109291"/>
<dbReference type="ProteomicsDB" id="301731"/>
<dbReference type="Pumba" id="Q8BTY1"/>
<dbReference type="DNASU" id="70266"/>
<dbReference type="Ensembl" id="ENSMUST00000044038.10">
    <property type="protein sequence ID" value="ENSMUSP00000038612.4"/>
    <property type="gene ID" value="ENSMUSG00000039648.15"/>
</dbReference>
<dbReference type="Ensembl" id="ENSMUST00000113661.10">
    <property type="protein sequence ID" value="ENSMUSP00000109291.4"/>
    <property type="gene ID" value="ENSMUSG00000039648.15"/>
</dbReference>
<dbReference type="Ensembl" id="ENSMUST00000113662.8">
    <property type="protein sequence ID" value="ENSMUSP00000109292.2"/>
    <property type="gene ID" value="ENSMUSG00000039648.15"/>
</dbReference>
<dbReference type="Ensembl" id="ENSMUST00000113663.9">
    <property type="protein sequence ID" value="ENSMUSP00000109293.3"/>
    <property type="gene ID" value="ENSMUSG00000039648.15"/>
</dbReference>
<dbReference type="GeneID" id="70266"/>
<dbReference type="KEGG" id="mmu:70266"/>
<dbReference type="UCSC" id="uc008jbo.1">
    <property type="organism name" value="mouse"/>
</dbReference>
<dbReference type="AGR" id="MGI:1917516"/>
<dbReference type="CTD" id="883"/>
<dbReference type="MGI" id="MGI:1917516">
    <property type="gene designation" value="Kyat1"/>
</dbReference>
<dbReference type="VEuPathDB" id="HostDB:ENSMUSG00000039648"/>
<dbReference type="eggNOG" id="KOG0257">
    <property type="taxonomic scope" value="Eukaryota"/>
</dbReference>
<dbReference type="GeneTree" id="ENSGT00940000158797"/>
<dbReference type="InParanoid" id="Q8BTY1"/>
<dbReference type="OMA" id="SQGANQY"/>
<dbReference type="OrthoDB" id="2414662at2759"/>
<dbReference type="PhylomeDB" id="Q8BTY1"/>
<dbReference type="TreeFam" id="TF105482"/>
<dbReference type="BRENDA" id="2.6.1.7">
    <property type="organism ID" value="3474"/>
</dbReference>
<dbReference type="Reactome" id="R-MMU-71240">
    <property type="pathway name" value="Tryptophan catabolism"/>
</dbReference>
<dbReference type="Reactome" id="R-MMU-8964208">
    <property type="pathway name" value="Phenylalanine metabolism"/>
</dbReference>
<dbReference type="Reactome" id="R-MMU-8964539">
    <property type="pathway name" value="Glutamate and glutamine metabolism"/>
</dbReference>
<dbReference type="UniPathway" id="UPA00334">
    <property type="reaction ID" value="UER00726"/>
</dbReference>
<dbReference type="BioGRID-ORCS" id="70266">
    <property type="hits" value="1 hit in 77 CRISPR screens"/>
</dbReference>
<dbReference type="PRO" id="PR:Q8BTY1"/>
<dbReference type="Proteomes" id="UP000000589">
    <property type="component" value="Chromosome 2"/>
</dbReference>
<dbReference type="RNAct" id="Q8BTY1">
    <property type="molecule type" value="protein"/>
</dbReference>
<dbReference type="Bgee" id="ENSMUSG00000039648">
    <property type="expression patterns" value="Expressed in esophagus and 254 other cell types or tissues"/>
</dbReference>
<dbReference type="ExpressionAtlas" id="Q8BTY1">
    <property type="expression patterns" value="baseline and differential"/>
</dbReference>
<dbReference type="GO" id="GO:0005829">
    <property type="term" value="C:cytosol"/>
    <property type="evidence" value="ECO:0007669"/>
    <property type="project" value="UniProtKB-SubCell"/>
</dbReference>
<dbReference type="GO" id="GO:0047804">
    <property type="term" value="F:cysteine-S-conjugate beta-lyase activity"/>
    <property type="evidence" value="ECO:0007669"/>
    <property type="project" value="UniProtKB-EC"/>
</dbReference>
<dbReference type="GO" id="GO:0047316">
    <property type="term" value="F:glutamine-phenylpyruvate transaminase activity"/>
    <property type="evidence" value="ECO:0007669"/>
    <property type="project" value="UniProtKB-EC"/>
</dbReference>
<dbReference type="GO" id="GO:0016212">
    <property type="term" value="F:kynurenine-oxoglutarate transaminase activity"/>
    <property type="evidence" value="ECO:0000250"/>
    <property type="project" value="UniProtKB"/>
</dbReference>
<dbReference type="GO" id="GO:0042803">
    <property type="term" value="F:protein homodimerization activity"/>
    <property type="evidence" value="ECO:0007669"/>
    <property type="project" value="Ensembl"/>
</dbReference>
<dbReference type="GO" id="GO:0030170">
    <property type="term" value="F:pyridoxal phosphate binding"/>
    <property type="evidence" value="ECO:0007669"/>
    <property type="project" value="InterPro"/>
</dbReference>
<dbReference type="GO" id="GO:0009058">
    <property type="term" value="P:biosynthetic process"/>
    <property type="evidence" value="ECO:0007669"/>
    <property type="project" value="InterPro"/>
</dbReference>
<dbReference type="GO" id="GO:0070189">
    <property type="term" value="P:kynurenine metabolic process"/>
    <property type="evidence" value="ECO:0000250"/>
    <property type="project" value="UniProtKB"/>
</dbReference>
<dbReference type="GO" id="GO:0097053">
    <property type="term" value="P:L-kynurenine catabolic process"/>
    <property type="evidence" value="ECO:0007669"/>
    <property type="project" value="UniProtKB-UniPathway"/>
</dbReference>
<dbReference type="GO" id="GO:0009617">
    <property type="term" value="P:response to bacterium"/>
    <property type="evidence" value="ECO:0000270"/>
    <property type="project" value="MGI"/>
</dbReference>
<dbReference type="CDD" id="cd00609">
    <property type="entry name" value="AAT_like"/>
    <property type="match status" value="1"/>
</dbReference>
<dbReference type="FunFam" id="3.40.640.10:FF:000264">
    <property type="entry name" value="Kynurenine--oxoglutarate transaminase 1"/>
    <property type="match status" value="1"/>
</dbReference>
<dbReference type="FunFam" id="3.90.1150.10:FF:000141">
    <property type="entry name" value="Kynurenine--oxoglutarate transaminase 1"/>
    <property type="match status" value="2"/>
</dbReference>
<dbReference type="Gene3D" id="3.90.1150.10">
    <property type="entry name" value="Aspartate Aminotransferase, domain 1"/>
    <property type="match status" value="1"/>
</dbReference>
<dbReference type="Gene3D" id="3.40.640.10">
    <property type="entry name" value="Type I PLP-dependent aspartate aminotransferase-like (Major domain)"/>
    <property type="match status" value="1"/>
</dbReference>
<dbReference type="InterPro" id="IPR004839">
    <property type="entry name" value="Aminotransferase_I/II_large"/>
</dbReference>
<dbReference type="InterPro" id="IPR051326">
    <property type="entry name" value="Kynurenine-oxoglutarate_AT"/>
</dbReference>
<dbReference type="InterPro" id="IPR015424">
    <property type="entry name" value="PyrdxlP-dep_Trfase"/>
</dbReference>
<dbReference type="InterPro" id="IPR015421">
    <property type="entry name" value="PyrdxlP-dep_Trfase_major"/>
</dbReference>
<dbReference type="InterPro" id="IPR015422">
    <property type="entry name" value="PyrdxlP-dep_Trfase_small"/>
</dbReference>
<dbReference type="PANTHER" id="PTHR43807">
    <property type="entry name" value="FI04487P"/>
    <property type="match status" value="1"/>
</dbReference>
<dbReference type="PANTHER" id="PTHR43807:SF14">
    <property type="entry name" value="KYNURENINE--OXOGLUTARATE TRANSAMINASE 1"/>
    <property type="match status" value="1"/>
</dbReference>
<dbReference type="Pfam" id="PF00155">
    <property type="entry name" value="Aminotran_1_2"/>
    <property type="match status" value="1"/>
</dbReference>
<dbReference type="SUPFAM" id="SSF53383">
    <property type="entry name" value="PLP-dependent transferases"/>
    <property type="match status" value="1"/>
</dbReference>